<reference key="1">
    <citation type="journal article" date="2007" name="Science">
        <title>Evolutionary and biomedical insights from the rhesus macaque genome.</title>
        <authorList>
            <person name="Gibbs R.A."/>
            <person name="Rogers J."/>
            <person name="Katze M.G."/>
            <person name="Bumgarner R."/>
            <person name="Weinstock G.M."/>
            <person name="Mardis E.R."/>
            <person name="Remington K.A."/>
            <person name="Strausberg R.L."/>
            <person name="Venter J.C."/>
            <person name="Wilson R.K."/>
            <person name="Batzer M.A."/>
            <person name="Bustamante C.D."/>
            <person name="Eichler E.E."/>
            <person name="Hahn M.W."/>
            <person name="Hardison R.C."/>
            <person name="Makova K.D."/>
            <person name="Miller W."/>
            <person name="Milosavljevic A."/>
            <person name="Palermo R.E."/>
            <person name="Siepel A."/>
            <person name="Sikela J.M."/>
            <person name="Attaway T."/>
            <person name="Bell S."/>
            <person name="Bernard K.E."/>
            <person name="Buhay C.J."/>
            <person name="Chandrabose M.N."/>
            <person name="Dao M."/>
            <person name="Davis C."/>
            <person name="Delehaunty K.D."/>
            <person name="Ding Y."/>
            <person name="Dinh H.H."/>
            <person name="Dugan-Rocha S."/>
            <person name="Fulton L.A."/>
            <person name="Gabisi R.A."/>
            <person name="Garner T.T."/>
            <person name="Godfrey J."/>
            <person name="Hawes A.C."/>
            <person name="Hernandez J."/>
            <person name="Hines S."/>
            <person name="Holder M."/>
            <person name="Hume J."/>
            <person name="Jhangiani S.N."/>
            <person name="Joshi V."/>
            <person name="Khan Z.M."/>
            <person name="Kirkness E.F."/>
            <person name="Cree A."/>
            <person name="Fowler R.G."/>
            <person name="Lee S."/>
            <person name="Lewis L.R."/>
            <person name="Li Z."/>
            <person name="Liu Y.-S."/>
            <person name="Moore S.M."/>
            <person name="Muzny D."/>
            <person name="Nazareth L.V."/>
            <person name="Ngo D.N."/>
            <person name="Okwuonu G.O."/>
            <person name="Pai G."/>
            <person name="Parker D."/>
            <person name="Paul H.A."/>
            <person name="Pfannkoch C."/>
            <person name="Pohl C.S."/>
            <person name="Rogers Y.-H.C."/>
            <person name="Ruiz S.J."/>
            <person name="Sabo A."/>
            <person name="Santibanez J."/>
            <person name="Schneider B.W."/>
            <person name="Smith S.M."/>
            <person name="Sodergren E."/>
            <person name="Svatek A.F."/>
            <person name="Utterback T.R."/>
            <person name="Vattathil S."/>
            <person name="Warren W."/>
            <person name="White C.S."/>
            <person name="Chinwalla A.T."/>
            <person name="Feng Y."/>
            <person name="Halpern A.L."/>
            <person name="Hillier L.W."/>
            <person name="Huang X."/>
            <person name="Minx P."/>
            <person name="Nelson J.O."/>
            <person name="Pepin K.H."/>
            <person name="Qin X."/>
            <person name="Sutton G.G."/>
            <person name="Venter E."/>
            <person name="Walenz B.P."/>
            <person name="Wallis J.W."/>
            <person name="Worley K.C."/>
            <person name="Yang S.-P."/>
            <person name="Jones S.M."/>
            <person name="Marra M.A."/>
            <person name="Rocchi M."/>
            <person name="Schein J.E."/>
            <person name="Baertsch R."/>
            <person name="Clarke L."/>
            <person name="Csuros M."/>
            <person name="Glasscock J."/>
            <person name="Harris R.A."/>
            <person name="Havlak P."/>
            <person name="Jackson A.R."/>
            <person name="Jiang H."/>
            <person name="Liu Y."/>
            <person name="Messina D.N."/>
            <person name="Shen Y."/>
            <person name="Song H.X.-Z."/>
            <person name="Wylie T."/>
            <person name="Zhang L."/>
            <person name="Birney E."/>
            <person name="Han K."/>
            <person name="Konkel M.K."/>
            <person name="Lee J."/>
            <person name="Smit A.F.A."/>
            <person name="Ullmer B."/>
            <person name="Wang H."/>
            <person name="Xing J."/>
            <person name="Burhans R."/>
            <person name="Cheng Z."/>
            <person name="Karro J.E."/>
            <person name="Ma J."/>
            <person name="Raney B."/>
            <person name="She X."/>
            <person name="Cox M.J."/>
            <person name="Demuth J.P."/>
            <person name="Dumas L.J."/>
            <person name="Han S.-G."/>
            <person name="Hopkins J."/>
            <person name="Karimpour-Fard A."/>
            <person name="Kim Y.H."/>
            <person name="Pollack J.R."/>
            <person name="Vinar T."/>
            <person name="Addo-Quaye C."/>
            <person name="Degenhardt J."/>
            <person name="Denby A."/>
            <person name="Hubisz M.J."/>
            <person name="Indap A."/>
            <person name="Kosiol C."/>
            <person name="Lahn B.T."/>
            <person name="Lawson H.A."/>
            <person name="Marklein A."/>
            <person name="Nielsen R."/>
            <person name="Vallender E.J."/>
            <person name="Clark A.G."/>
            <person name="Ferguson B."/>
            <person name="Hernandez R.D."/>
            <person name="Hirani K."/>
            <person name="Kehrer-Sawatzki H."/>
            <person name="Kolb J."/>
            <person name="Patil S."/>
            <person name="Pu L.-L."/>
            <person name="Ren Y."/>
            <person name="Smith D.G."/>
            <person name="Wheeler D.A."/>
            <person name="Schenck I."/>
            <person name="Ball E.V."/>
            <person name="Chen R."/>
            <person name="Cooper D.N."/>
            <person name="Giardine B."/>
            <person name="Hsu F."/>
            <person name="Kent W.J."/>
            <person name="Lesk A."/>
            <person name="Nelson D.L."/>
            <person name="O'brien W.E."/>
            <person name="Pruefer K."/>
            <person name="Stenson P.D."/>
            <person name="Wallace J.C."/>
            <person name="Ke H."/>
            <person name="Liu X.-M."/>
            <person name="Wang P."/>
            <person name="Xiang A.P."/>
            <person name="Yang F."/>
            <person name="Barber G.P."/>
            <person name="Haussler D."/>
            <person name="Karolchik D."/>
            <person name="Kern A.D."/>
            <person name="Kuhn R.M."/>
            <person name="Smith K.E."/>
            <person name="Zwieg A.S."/>
        </authorList>
    </citation>
    <scope>NUCLEOTIDE SEQUENCE [LARGE SCALE GENOMIC DNA]</scope>
    <source>
        <strain>17573</strain>
    </source>
</reference>
<name>MTND_MACMU</name>
<accession>F6QS54</accession>
<comment type="function">
    <text evidence="1">Catalyzes 2 different reactions between oxygen and the acireductone 1,2-dihydroxy-3-keto-5-methylthiopentene (DHK-MTPene) depending upon the metal bound in the active site. Fe-containing acireductone dioxygenase (Fe-ARD) produces formate and 2-keto-4-methylthiobutyrate (KMTB), the alpha-ketoacid precursor of methionine in the methionine recycle pathway. Ni-containing acireductone dioxygenase (Ni-ARD) produces methylthiopropionate, carbon monoxide and formate, and does not lie on the methionine recycle pathway. Also down-regulates cell migration mediated by MMP14.</text>
</comment>
<comment type="catalytic activity">
    <reaction evidence="1">
        <text>1,2-dihydroxy-5-(methylsulfanyl)pent-1-en-3-one + O2 = 4-methylsulfanyl-2-oxobutanoate + formate + 2 H(+)</text>
        <dbReference type="Rhea" id="RHEA:24504"/>
        <dbReference type="ChEBI" id="CHEBI:15378"/>
        <dbReference type="ChEBI" id="CHEBI:15379"/>
        <dbReference type="ChEBI" id="CHEBI:15740"/>
        <dbReference type="ChEBI" id="CHEBI:16723"/>
        <dbReference type="ChEBI" id="CHEBI:49252"/>
        <dbReference type="EC" id="1.13.11.54"/>
    </reaction>
</comment>
<comment type="catalytic activity">
    <reaction evidence="1">
        <text>1,2-dihydroxy-5-(methylsulfanyl)pent-1-en-3-one + O2 = 3-(methylsulfanyl)propanoate + CO + formate + 2 H(+)</text>
        <dbReference type="Rhea" id="RHEA:14161"/>
        <dbReference type="ChEBI" id="CHEBI:15378"/>
        <dbReference type="ChEBI" id="CHEBI:15379"/>
        <dbReference type="ChEBI" id="CHEBI:15740"/>
        <dbReference type="ChEBI" id="CHEBI:17245"/>
        <dbReference type="ChEBI" id="CHEBI:49016"/>
        <dbReference type="ChEBI" id="CHEBI:49252"/>
        <dbReference type="EC" id="1.13.11.53"/>
    </reaction>
</comment>
<comment type="cofactor">
    <cofactor evidence="1">
        <name>Fe(2+)</name>
        <dbReference type="ChEBI" id="CHEBI:29033"/>
    </cofactor>
    <cofactor evidence="1">
        <name>Ni(2+)</name>
        <dbReference type="ChEBI" id="CHEBI:49786"/>
    </cofactor>
    <text evidence="1">Binds either 1 Fe or Ni cation per monomer. Iron-binding promotes an acireductone dioxygenase reaction producing 2-keto-4-methylthiobutyrate, while nickel-binding promotes an acireductone dioxygenase reaction producing 3-(methylsulfanyl)propanoate.</text>
</comment>
<comment type="pathway">
    <text evidence="1">Amino-acid biosynthesis; L-methionine biosynthesis via salvage pathway; L-methionine from S-methyl-5-thio-alpha-D-ribose 1-phosphate: step 5/6.</text>
</comment>
<comment type="subunit">
    <text evidence="1">Monomer. Interacts with MMP14.</text>
</comment>
<comment type="subcellular location">
    <subcellularLocation>
        <location evidence="1">Cytoplasm</location>
    </subcellularLocation>
    <subcellularLocation>
        <location evidence="1">Nucleus</location>
    </subcellularLocation>
    <subcellularLocation>
        <location evidence="1">Cell membrane</location>
        <topology evidence="1">Peripheral membrane protein</topology>
        <orientation evidence="1">Cytoplasmic side</orientation>
    </subcellularLocation>
    <text evidence="1">Localizes to the plasma membrane when complexed to MMP14.</text>
</comment>
<comment type="similarity">
    <text evidence="1">Belongs to the acireductone dioxygenase (ARD) family.</text>
</comment>
<proteinExistence type="inferred from homology"/>
<keyword id="KW-0028">Amino-acid biosynthesis</keyword>
<keyword id="KW-1003">Cell membrane</keyword>
<keyword id="KW-0963">Cytoplasm</keyword>
<keyword id="KW-0223">Dioxygenase</keyword>
<keyword id="KW-0408">Iron</keyword>
<keyword id="KW-0472">Membrane</keyword>
<keyword id="KW-0479">Metal-binding</keyword>
<keyword id="KW-0486">Methionine biosynthesis</keyword>
<keyword id="KW-0533">Nickel</keyword>
<keyword id="KW-0539">Nucleus</keyword>
<keyword id="KW-0560">Oxidoreductase</keyword>
<keyword id="KW-1185">Reference proteome</keyword>
<protein>
    <recommendedName>
        <fullName evidence="1">Acireductone dioxygenase</fullName>
    </recommendedName>
    <alternativeName>
        <fullName evidence="1">Acireductone dioxygenase (Fe(2+)-requiring)</fullName>
        <shortName evidence="1">ARD'</shortName>
        <shortName evidence="1">Fe-ARD</shortName>
        <ecNumber evidence="1">1.13.11.54</ecNumber>
    </alternativeName>
    <alternativeName>
        <fullName evidence="1">Acireductone dioxygenase (Ni(2+)-requiring)</fullName>
        <shortName evidence="1">ARD</shortName>
        <shortName evidence="1">Ni-ARD</shortName>
        <ecNumber evidence="1">1.13.11.53</ecNumber>
    </alternativeName>
    <alternativeName>
        <fullName evidence="1">Membrane-type 1 matrix metalloproteinase cytoplasmic tail-binding protein 1</fullName>
        <shortName evidence="1">MTCBP-1</shortName>
    </alternativeName>
</protein>
<dbReference type="EC" id="1.13.11.54" evidence="1"/>
<dbReference type="EC" id="1.13.11.53" evidence="1"/>
<dbReference type="RefSeq" id="XP_014967103.1">
    <property type="nucleotide sequence ID" value="XM_015111617.2"/>
</dbReference>
<dbReference type="SMR" id="F6QS54"/>
<dbReference type="FunCoup" id="F6QS54">
    <property type="interactions" value="1583"/>
</dbReference>
<dbReference type="STRING" id="9544.ENSMMUP00000025585"/>
<dbReference type="PaxDb" id="9544-ENSMMUP00000025585"/>
<dbReference type="Ensembl" id="ENSMMUT00000027353.4">
    <property type="protein sequence ID" value="ENSMMUP00000025585.2"/>
    <property type="gene ID" value="ENSMMUG00000019471.4"/>
</dbReference>
<dbReference type="Ensembl" id="ENSMMUT00000043782.3">
    <property type="protein sequence ID" value="ENSMMUP00000036770.2"/>
    <property type="gene ID" value="ENSMMUG00000019471.4"/>
</dbReference>
<dbReference type="GeneID" id="722050"/>
<dbReference type="KEGG" id="mcc:722050"/>
<dbReference type="CTD" id="55256"/>
<dbReference type="VEuPathDB" id="HostDB:ENSMMUG00000019471"/>
<dbReference type="VGNC" id="VGNC:69738">
    <property type="gene designation" value="ADI1"/>
</dbReference>
<dbReference type="eggNOG" id="KOG2107">
    <property type="taxonomic scope" value="Eukaryota"/>
</dbReference>
<dbReference type="GeneTree" id="ENSGT00390000008195"/>
<dbReference type="HOGENOM" id="CLU_090154_0_1_1"/>
<dbReference type="InParanoid" id="F6QS54"/>
<dbReference type="OMA" id="WYMDESQ"/>
<dbReference type="OrthoDB" id="1867259at2759"/>
<dbReference type="TreeFam" id="TF300231"/>
<dbReference type="UniPathway" id="UPA00904">
    <property type="reaction ID" value="UER00878"/>
</dbReference>
<dbReference type="Proteomes" id="UP000006718">
    <property type="component" value="Chromosome 13"/>
</dbReference>
<dbReference type="Bgee" id="ENSMMUG00000019471">
    <property type="expression patterns" value="Expressed in liver and 21 other cell types or tissues"/>
</dbReference>
<dbReference type="ExpressionAtlas" id="F6QS54">
    <property type="expression patterns" value="baseline"/>
</dbReference>
<dbReference type="GO" id="GO:0005737">
    <property type="term" value="C:cytoplasm"/>
    <property type="evidence" value="ECO:0007669"/>
    <property type="project" value="UniProtKB-SubCell"/>
</dbReference>
<dbReference type="GO" id="GO:0005634">
    <property type="term" value="C:nucleus"/>
    <property type="evidence" value="ECO:0007669"/>
    <property type="project" value="UniProtKB-SubCell"/>
</dbReference>
<dbReference type="GO" id="GO:0005886">
    <property type="term" value="C:plasma membrane"/>
    <property type="evidence" value="ECO:0007669"/>
    <property type="project" value="UniProtKB-SubCell"/>
</dbReference>
<dbReference type="GO" id="GO:0010308">
    <property type="term" value="F:acireductone dioxygenase (Ni2+-requiring) activity"/>
    <property type="evidence" value="ECO:0007669"/>
    <property type="project" value="UniProtKB-UniRule"/>
</dbReference>
<dbReference type="GO" id="GO:0010309">
    <property type="term" value="F:acireductone dioxygenase [iron(II)-requiring] activity"/>
    <property type="evidence" value="ECO:0000318"/>
    <property type="project" value="GO_Central"/>
</dbReference>
<dbReference type="GO" id="GO:0005506">
    <property type="term" value="F:iron ion binding"/>
    <property type="evidence" value="ECO:0007669"/>
    <property type="project" value="UniProtKB-UniRule"/>
</dbReference>
<dbReference type="GO" id="GO:0016151">
    <property type="term" value="F:nickel cation binding"/>
    <property type="evidence" value="ECO:0007669"/>
    <property type="project" value="UniProtKB-UniRule"/>
</dbReference>
<dbReference type="GO" id="GO:0019509">
    <property type="term" value="P:L-methionine salvage from methylthioadenosine"/>
    <property type="evidence" value="ECO:0007669"/>
    <property type="project" value="UniProtKB-UniRule"/>
</dbReference>
<dbReference type="GO" id="GO:0006555">
    <property type="term" value="P:methionine metabolic process"/>
    <property type="evidence" value="ECO:0000318"/>
    <property type="project" value="GO_Central"/>
</dbReference>
<dbReference type="CDD" id="cd02232">
    <property type="entry name" value="cupin_ARD"/>
    <property type="match status" value="1"/>
</dbReference>
<dbReference type="FunFam" id="2.60.120.10:FF:000031">
    <property type="entry name" value="1,2-dihydroxy-3-keto-5-methylthiopentene dioxygenase"/>
    <property type="match status" value="1"/>
</dbReference>
<dbReference type="Gene3D" id="2.60.120.10">
    <property type="entry name" value="Jelly Rolls"/>
    <property type="match status" value="1"/>
</dbReference>
<dbReference type="HAMAP" id="MF_03154">
    <property type="entry name" value="Salvage_MtnD_euk"/>
    <property type="match status" value="1"/>
</dbReference>
<dbReference type="InterPro" id="IPR004313">
    <property type="entry name" value="ARD"/>
</dbReference>
<dbReference type="InterPro" id="IPR027496">
    <property type="entry name" value="ARD_euk"/>
</dbReference>
<dbReference type="InterPro" id="IPR014710">
    <property type="entry name" value="RmlC-like_jellyroll"/>
</dbReference>
<dbReference type="InterPro" id="IPR011051">
    <property type="entry name" value="RmlC_Cupin_sf"/>
</dbReference>
<dbReference type="PANTHER" id="PTHR23418">
    <property type="entry name" value="ACIREDUCTONE DIOXYGENASE"/>
    <property type="match status" value="1"/>
</dbReference>
<dbReference type="PANTHER" id="PTHR23418:SF0">
    <property type="entry name" value="ACIREDUCTONE DIOXYGENASE"/>
    <property type="match status" value="1"/>
</dbReference>
<dbReference type="Pfam" id="PF03079">
    <property type="entry name" value="ARD"/>
    <property type="match status" value="1"/>
</dbReference>
<dbReference type="SUPFAM" id="SSF51182">
    <property type="entry name" value="RmlC-like cupins"/>
    <property type="match status" value="1"/>
</dbReference>
<feature type="chain" id="PRO_0000414328" description="Acireductone dioxygenase">
    <location>
        <begin position="1"/>
        <end position="179"/>
    </location>
</feature>
<feature type="binding site" evidence="1">
    <location>
        <position position="88"/>
    </location>
    <ligand>
        <name>Fe(2+)</name>
        <dbReference type="ChEBI" id="CHEBI:29033"/>
        <note>for iron-dependent acireductone dioxygenase activity</note>
    </ligand>
</feature>
<feature type="binding site" evidence="1">
    <location>
        <position position="88"/>
    </location>
    <ligand>
        <name>Ni(2+)</name>
        <dbReference type="ChEBI" id="CHEBI:49786"/>
        <note>for nickel-dependent acireductone dioxygenase activity</note>
    </ligand>
</feature>
<feature type="binding site" evidence="1">
    <location>
        <position position="90"/>
    </location>
    <ligand>
        <name>Fe(2+)</name>
        <dbReference type="ChEBI" id="CHEBI:29033"/>
        <note>for iron-dependent acireductone dioxygenase activity</note>
    </ligand>
</feature>
<feature type="binding site" evidence="1">
    <location>
        <position position="90"/>
    </location>
    <ligand>
        <name>Ni(2+)</name>
        <dbReference type="ChEBI" id="CHEBI:49786"/>
        <note>for nickel-dependent acireductone dioxygenase activity</note>
    </ligand>
</feature>
<feature type="binding site" evidence="1">
    <location>
        <position position="94"/>
    </location>
    <ligand>
        <name>Fe(2+)</name>
        <dbReference type="ChEBI" id="CHEBI:29033"/>
        <note>for iron-dependent acireductone dioxygenase activity</note>
    </ligand>
</feature>
<feature type="binding site" evidence="1">
    <location>
        <position position="94"/>
    </location>
    <ligand>
        <name>Ni(2+)</name>
        <dbReference type="ChEBI" id="CHEBI:49786"/>
        <note>for nickel-dependent acireductone dioxygenase activity</note>
    </ligand>
</feature>
<feature type="binding site" evidence="1">
    <location>
        <position position="133"/>
    </location>
    <ligand>
        <name>Fe(2+)</name>
        <dbReference type="ChEBI" id="CHEBI:29033"/>
        <note>for iron-dependent acireductone dioxygenase activity</note>
    </ligand>
</feature>
<feature type="binding site" evidence="1">
    <location>
        <position position="133"/>
    </location>
    <ligand>
        <name>Ni(2+)</name>
        <dbReference type="ChEBI" id="CHEBI:49786"/>
        <note>for nickel-dependent acireductone dioxygenase activity</note>
    </ligand>
</feature>
<organism>
    <name type="scientific">Macaca mulatta</name>
    <name type="common">Rhesus macaque</name>
    <dbReference type="NCBI Taxonomy" id="9544"/>
    <lineage>
        <taxon>Eukaryota</taxon>
        <taxon>Metazoa</taxon>
        <taxon>Chordata</taxon>
        <taxon>Craniata</taxon>
        <taxon>Vertebrata</taxon>
        <taxon>Euteleostomi</taxon>
        <taxon>Mammalia</taxon>
        <taxon>Eutheria</taxon>
        <taxon>Euarchontoglires</taxon>
        <taxon>Primates</taxon>
        <taxon>Haplorrhini</taxon>
        <taxon>Catarrhini</taxon>
        <taxon>Cercopithecidae</taxon>
        <taxon>Cercopithecinae</taxon>
        <taxon>Macaca</taxon>
    </lineage>
</organism>
<gene>
    <name evidence="1" type="primary">ADI1</name>
    <name evidence="1" type="synonym">MTCBP1</name>
</gene>
<sequence length="179" mass="21573">MVQAWYMDDAPGDPRQPHRPDPDRPVGLEQLRRLGVLYWKLDADKYENDPELEKIRRERNYSWMDIITICKDKLPNYEEKIKMFYEEHLHLDDEIRYILDGSGYFDVRDKEDKWIRIFMEKGDMITLPAGIYHRFTVDEKNYAKAMRLFVGEPVWTAYNRPADHFEARGQYMKFLAQTA</sequence>
<evidence type="ECO:0000255" key="1">
    <source>
        <dbReference type="HAMAP-Rule" id="MF_03154"/>
    </source>
</evidence>